<protein>
    <recommendedName>
        <fullName evidence="1">DNA polymerase IV</fullName>
        <shortName evidence="1">Pol IV</shortName>
        <ecNumber evidence="1">2.7.7.7</ecNumber>
    </recommendedName>
</protein>
<name>DPO4_SHEFN</name>
<sequence length="359" mass="40118">MRKIIHIDMDCYFAAVEMRDFPELRGKPIAVGGRSDRRGVISTCSYEARKFGVRSAMSSYHALQLCPQLILVPGRMEVYKSVSLQIREIFHRYTDLVEPLSLDEAYLDVTDCDAHQGSATLIAKTIRDEIFEVTGLTASAGIAPIKFLAKIASDLNKPNGQYVITPNQIADFVKDLPLSKIPGVGKVTSKKLADIGLTTCYDVQQYPKVQLIEAFGKFGHVLAERAQGIDSRQISPHRVRKSVGVETTLAKDIFTLEQCHQVLPQLIQELSTRVRRSAKDRQIHKQVVKLKFNDFKQTTIEHRSDEISINLFHELLLQALQRSQGRGIRLVGVSVGLADVTLASSESSVDQITQLDLQF</sequence>
<accession>Q086K1</accession>
<dbReference type="EC" id="2.7.7.7" evidence="1"/>
<dbReference type="EMBL" id="CP000447">
    <property type="protein sequence ID" value="ABI70814.1"/>
    <property type="molecule type" value="Genomic_DNA"/>
</dbReference>
<dbReference type="RefSeq" id="WP_011636435.1">
    <property type="nucleotide sequence ID" value="NC_008345.1"/>
</dbReference>
<dbReference type="SMR" id="Q086K1"/>
<dbReference type="STRING" id="318167.Sfri_0961"/>
<dbReference type="KEGG" id="sfr:Sfri_0961"/>
<dbReference type="eggNOG" id="COG0389">
    <property type="taxonomic scope" value="Bacteria"/>
</dbReference>
<dbReference type="HOGENOM" id="CLU_012348_1_2_6"/>
<dbReference type="OrthoDB" id="9808813at2"/>
<dbReference type="Proteomes" id="UP000000684">
    <property type="component" value="Chromosome"/>
</dbReference>
<dbReference type="GO" id="GO:0005829">
    <property type="term" value="C:cytosol"/>
    <property type="evidence" value="ECO:0007669"/>
    <property type="project" value="TreeGrafter"/>
</dbReference>
<dbReference type="GO" id="GO:0003684">
    <property type="term" value="F:damaged DNA binding"/>
    <property type="evidence" value="ECO:0007669"/>
    <property type="project" value="InterPro"/>
</dbReference>
<dbReference type="GO" id="GO:0003887">
    <property type="term" value="F:DNA-directed DNA polymerase activity"/>
    <property type="evidence" value="ECO:0007669"/>
    <property type="project" value="UniProtKB-UniRule"/>
</dbReference>
<dbReference type="GO" id="GO:0000287">
    <property type="term" value="F:magnesium ion binding"/>
    <property type="evidence" value="ECO:0007669"/>
    <property type="project" value="UniProtKB-UniRule"/>
</dbReference>
<dbReference type="GO" id="GO:0006261">
    <property type="term" value="P:DNA-templated DNA replication"/>
    <property type="evidence" value="ECO:0007669"/>
    <property type="project" value="UniProtKB-UniRule"/>
</dbReference>
<dbReference type="GO" id="GO:0042276">
    <property type="term" value="P:error-prone translesion synthesis"/>
    <property type="evidence" value="ECO:0007669"/>
    <property type="project" value="TreeGrafter"/>
</dbReference>
<dbReference type="GO" id="GO:0009432">
    <property type="term" value="P:SOS response"/>
    <property type="evidence" value="ECO:0007669"/>
    <property type="project" value="TreeGrafter"/>
</dbReference>
<dbReference type="CDD" id="cd03586">
    <property type="entry name" value="PolY_Pol_IV_kappa"/>
    <property type="match status" value="1"/>
</dbReference>
<dbReference type="FunFam" id="1.10.150.20:FF:000019">
    <property type="entry name" value="DNA polymerase IV"/>
    <property type="match status" value="1"/>
</dbReference>
<dbReference type="FunFam" id="3.30.70.270:FF:000002">
    <property type="entry name" value="DNA polymerase IV"/>
    <property type="match status" value="1"/>
</dbReference>
<dbReference type="FunFam" id="3.40.1170.60:FF:000001">
    <property type="entry name" value="DNA polymerase IV"/>
    <property type="match status" value="1"/>
</dbReference>
<dbReference type="Gene3D" id="3.30.70.270">
    <property type="match status" value="1"/>
</dbReference>
<dbReference type="Gene3D" id="3.40.1170.60">
    <property type="match status" value="1"/>
</dbReference>
<dbReference type="Gene3D" id="1.10.150.20">
    <property type="entry name" value="5' to 3' exonuclease, C-terminal subdomain"/>
    <property type="match status" value="1"/>
</dbReference>
<dbReference type="Gene3D" id="3.30.1490.100">
    <property type="entry name" value="DNA polymerase, Y-family, little finger domain"/>
    <property type="match status" value="1"/>
</dbReference>
<dbReference type="HAMAP" id="MF_01113">
    <property type="entry name" value="DNApol_IV"/>
    <property type="match status" value="1"/>
</dbReference>
<dbReference type="InterPro" id="IPR043502">
    <property type="entry name" value="DNA/RNA_pol_sf"/>
</dbReference>
<dbReference type="InterPro" id="IPR036775">
    <property type="entry name" value="DNA_pol_Y-fam_lit_finger_sf"/>
</dbReference>
<dbReference type="InterPro" id="IPR017961">
    <property type="entry name" value="DNA_pol_Y-fam_little_finger"/>
</dbReference>
<dbReference type="InterPro" id="IPR050116">
    <property type="entry name" value="DNA_polymerase-Y"/>
</dbReference>
<dbReference type="InterPro" id="IPR022880">
    <property type="entry name" value="DNApol_IV"/>
</dbReference>
<dbReference type="InterPro" id="IPR053848">
    <property type="entry name" value="IMS_HHH_1"/>
</dbReference>
<dbReference type="InterPro" id="IPR043128">
    <property type="entry name" value="Rev_trsase/Diguanyl_cyclase"/>
</dbReference>
<dbReference type="InterPro" id="IPR001126">
    <property type="entry name" value="UmuC"/>
</dbReference>
<dbReference type="NCBIfam" id="NF002677">
    <property type="entry name" value="PRK02406.1"/>
    <property type="match status" value="1"/>
</dbReference>
<dbReference type="PANTHER" id="PTHR11076:SF33">
    <property type="entry name" value="DNA POLYMERASE KAPPA"/>
    <property type="match status" value="1"/>
</dbReference>
<dbReference type="PANTHER" id="PTHR11076">
    <property type="entry name" value="DNA REPAIR POLYMERASE UMUC / TRANSFERASE FAMILY MEMBER"/>
    <property type="match status" value="1"/>
</dbReference>
<dbReference type="Pfam" id="PF00817">
    <property type="entry name" value="IMS"/>
    <property type="match status" value="1"/>
</dbReference>
<dbReference type="Pfam" id="PF11799">
    <property type="entry name" value="IMS_C"/>
    <property type="match status" value="1"/>
</dbReference>
<dbReference type="Pfam" id="PF21999">
    <property type="entry name" value="IMS_HHH_1"/>
    <property type="match status" value="1"/>
</dbReference>
<dbReference type="SUPFAM" id="SSF56672">
    <property type="entry name" value="DNA/RNA polymerases"/>
    <property type="match status" value="1"/>
</dbReference>
<dbReference type="SUPFAM" id="SSF100879">
    <property type="entry name" value="Lesion bypass DNA polymerase (Y-family), little finger domain"/>
    <property type="match status" value="1"/>
</dbReference>
<dbReference type="PROSITE" id="PS50173">
    <property type="entry name" value="UMUC"/>
    <property type="match status" value="1"/>
</dbReference>
<reference key="1">
    <citation type="submission" date="2006-08" db="EMBL/GenBank/DDBJ databases">
        <title>Complete sequence of Shewanella frigidimarina NCIMB 400.</title>
        <authorList>
            <consortium name="US DOE Joint Genome Institute"/>
            <person name="Copeland A."/>
            <person name="Lucas S."/>
            <person name="Lapidus A."/>
            <person name="Barry K."/>
            <person name="Detter J.C."/>
            <person name="Glavina del Rio T."/>
            <person name="Hammon N."/>
            <person name="Israni S."/>
            <person name="Dalin E."/>
            <person name="Tice H."/>
            <person name="Pitluck S."/>
            <person name="Fredrickson J.K."/>
            <person name="Kolker E."/>
            <person name="McCuel L.A."/>
            <person name="DiChristina T."/>
            <person name="Nealson K.H."/>
            <person name="Newman D."/>
            <person name="Tiedje J.M."/>
            <person name="Zhou J."/>
            <person name="Romine M.F."/>
            <person name="Culley D.E."/>
            <person name="Serres M."/>
            <person name="Chertkov O."/>
            <person name="Brettin T."/>
            <person name="Bruce D."/>
            <person name="Han C."/>
            <person name="Tapia R."/>
            <person name="Gilna P."/>
            <person name="Schmutz J."/>
            <person name="Larimer F."/>
            <person name="Land M."/>
            <person name="Hauser L."/>
            <person name="Kyrpides N."/>
            <person name="Mikhailova N."/>
            <person name="Richardson P."/>
        </authorList>
    </citation>
    <scope>NUCLEOTIDE SEQUENCE [LARGE SCALE GENOMIC DNA]</scope>
    <source>
        <strain>NCIMB 400</strain>
    </source>
</reference>
<feature type="chain" id="PRO_1000084930" description="DNA polymerase IV">
    <location>
        <begin position="1"/>
        <end position="359"/>
    </location>
</feature>
<feature type="domain" description="UmuC" evidence="1">
    <location>
        <begin position="4"/>
        <end position="185"/>
    </location>
</feature>
<feature type="active site" evidence="1">
    <location>
        <position position="104"/>
    </location>
</feature>
<feature type="binding site" evidence="1">
    <location>
        <position position="8"/>
    </location>
    <ligand>
        <name>Mg(2+)</name>
        <dbReference type="ChEBI" id="CHEBI:18420"/>
    </ligand>
</feature>
<feature type="binding site" evidence="1">
    <location>
        <position position="103"/>
    </location>
    <ligand>
        <name>Mg(2+)</name>
        <dbReference type="ChEBI" id="CHEBI:18420"/>
    </ligand>
</feature>
<feature type="site" description="Substrate discrimination" evidence="1">
    <location>
        <position position="13"/>
    </location>
</feature>
<keyword id="KW-0963">Cytoplasm</keyword>
<keyword id="KW-0227">DNA damage</keyword>
<keyword id="KW-0234">DNA repair</keyword>
<keyword id="KW-0235">DNA replication</keyword>
<keyword id="KW-0238">DNA-binding</keyword>
<keyword id="KW-0239">DNA-directed DNA polymerase</keyword>
<keyword id="KW-0460">Magnesium</keyword>
<keyword id="KW-0479">Metal-binding</keyword>
<keyword id="KW-0515">Mutator protein</keyword>
<keyword id="KW-0548">Nucleotidyltransferase</keyword>
<keyword id="KW-1185">Reference proteome</keyword>
<keyword id="KW-0808">Transferase</keyword>
<gene>
    <name evidence="1" type="primary">dinB</name>
    <name type="ordered locus">Sfri_0961</name>
</gene>
<evidence type="ECO:0000255" key="1">
    <source>
        <dbReference type="HAMAP-Rule" id="MF_01113"/>
    </source>
</evidence>
<proteinExistence type="inferred from homology"/>
<organism>
    <name type="scientific">Shewanella frigidimarina (strain NCIMB 400)</name>
    <dbReference type="NCBI Taxonomy" id="318167"/>
    <lineage>
        <taxon>Bacteria</taxon>
        <taxon>Pseudomonadati</taxon>
        <taxon>Pseudomonadota</taxon>
        <taxon>Gammaproteobacteria</taxon>
        <taxon>Alteromonadales</taxon>
        <taxon>Shewanellaceae</taxon>
        <taxon>Shewanella</taxon>
    </lineage>
</organism>
<comment type="function">
    <text evidence="1">Poorly processive, error-prone DNA polymerase involved in untargeted mutagenesis. Copies undamaged DNA at stalled replication forks, which arise in vivo from mismatched or misaligned primer ends. These misaligned primers can be extended by PolIV. Exhibits no 3'-5' exonuclease (proofreading) activity. May be involved in translesional synthesis, in conjunction with the beta clamp from PolIII.</text>
</comment>
<comment type="catalytic activity">
    <reaction evidence="1">
        <text>DNA(n) + a 2'-deoxyribonucleoside 5'-triphosphate = DNA(n+1) + diphosphate</text>
        <dbReference type="Rhea" id="RHEA:22508"/>
        <dbReference type="Rhea" id="RHEA-COMP:17339"/>
        <dbReference type="Rhea" id="RHEA-COMP:17340"/>
        <dbReference type="ChEBI" id="CHEBI:33019"/>
        <dbReference type="ChEBI" id="CHEBI:61560"/>
        <dbReference type="ChEBI" id="CHEBI:173112"/>
        <dbReference type="EC" id="2.7.7.7"/>
    </reaction>
</comment>
<comment type="cofactor">
    <cofactor evidence="1">
        <name>Mg(2+)</name>
        <dbReference type="ChEBI" id="CHEBI:18420"/>
    </cofactor>
    <text evidence="1">Binds 2 magnesium ions per subunit.</text>
</comment>
<comment type="subunit">
    <text evidence="1">Monomer.</text>
</comment>
<comment type="subcellular location">
    <subcellularLocation>
        <location evidence="1">Cytoplasm</location>
    </subcellularLocation>
</comment>
<comment type="similarity">
    <text evidence="1">Belongs to the DNA polymerase type-Y family.</text>
</comment>